<comment type="catalytic activity">
    <reaction evidence="1">
        <text>acetaldehyde + NAD(+) + CoA = acetyl-CoA + NADH + H(+)</text>
        <dbReference type="Rhea" id="RHEA:23288"/>
        <dbReference type="ChEBI" id="CHEBI:15343"/>
        <dbReference type="ChEBI" id="CHEBI:15378"/>
        <dbReference type="ChEBI" id="CHEBI:57287"/>
        <dbReference type="ChEBI" id="CHEBI:57288"/>
        <dbReference type="ChEBI" id="CHEBI:57540"/>
        <dbReference type="ChEBI" id="CHEBI:57945"/>
        <dbReference type="EC" id="1.2.1.10"/>
    </reaction>
</comment>
<comment type="similarity">
    <text evidence="1">Belongs to the acetaldehyde dehydrogenase family.</text>
</comment>
<gene>
    <name type="ordered locus">RER_07400</name>
</gene>
<reference key="1">
    <citation type="submission" date="2005-03" db="EMBL/GenBank/DDBJ databases">
        <title>Comparison of the complete genome sequences of Rhodococcus erythropolis PR4 and Rhodococcus opacus B4.</title>
        <authorList>
            <person name="Takarada H."/>
            <person name="Sekine M."/>
            <person name="Hosoyama A."/>
            <person name="Yamada R."/>
            <person name="Fujisawa T."/>
            <person name="Omata S."/>
            <person name="Shimizu A."/>
            <person name="Tsukatani N."/>
            <person name="Tanikawa S."/>
            <person name="Fujita N."/>
            <person name="Harayama S."/>
        </authorList>
    </citation>
    <scope>NUCLEOTIDE SEQUENCE [LARGE SCALE GENOMIC DNA]</scope>
    <source>
        <strain>PR4 / NBRC 100887</strain>
    </source>
</reference>
<feature type="chain" id="PRO_0000387718" description="Acetaldehyde dehydrogenase 1">
    <location>
        <begin position="1"/>
        <end position="300"/>
    </location>
</feature>
<feature type="active site" description="Acyl-thioester intermediate" evidence="1">
    <location>
        <position position="126"/>
    </location>
</feature>
<feature type="binding site" evidence="1">
    <location>
        <begin position="11"/>
        <end position="14"/>
    </location>
    <ligand>
        <name>NAD(+)</name>
        <dbReference type="ChEBI" id="CHEBI:57540"/>
    </ligand>
</feature>
<feature type="binding site" evidence="1">
    <location>
        <begin position="157"/>
        <end position="165"/>
    </location>
    <ligand>
        <name>NAD(+)</name>
        <dbReference type="ChEBI" id="CHEBI:57540"/>
    </ligand>
</feature>
<feature type="binding site" evidence="1">
    <location>
        <position position="276"/>
    </location>
    <ligand>
        <name>NAD(+)</name>
        <dbReference type="ChEBI" id="CHEBI:57540"/>
    </ligand>
</feature>
<sequence>MTKASVAIVGSGNISTDLLYKLQRSEWLEPRWMIGIDPESEGLARARKMGLETSAEGVDWLLSQAEKPDLVFEATSAYVHREAAPRYEAAGIRAIDLTPAAVGPAVVPPANLREHLDAPNVNMITCGGQATIPIVYAVSRVVDVAYAEIVASVASLSAGPGTRANIDEFTKTTSRGIETIGGAQRGKAIIILNPADPPMIMRDTIFCAIPEDADQAAITDSIHRVVKDIQQYVPGYRLLNEPQFDKPSVVSGGYATVTTFVEVEGAGDFLPPYAGNLDIMTAAATKVGEEIAQKLLSVKA</sequence>
<organism>
    <name type="scientific">Rhodococcus erythropolis (strain PR4 / NBRC 100887)</name>
    <dbReference type="NCBI Taxonomy" id="234621"/>
    <lineage>
        <taxon>Bacteria</taxon>
        <taxon>Bacillati</taxon>
        <taxon>Actinomycetota</taxon>
        <taxon>Actinomycetes</taxon>
        <taxon>Mycobacteriales</taxon>
        <taxon>Nocardiaceae</taxon>
        <taxon>Rhodococcus</taxon>
        <taxon>Rhodococcus erythropolis group</taxon>
    </lineage>
</organism>
<dbReference type="EC" id="1.2.1.10" evidence="1"/>
<dbReference type="EMBL" id="AP008957">
    <property type="protein sequence ID" value="BAH31448.1"/>
    <property type="molecule type" value="Genomic_DNA"/>
</dbReference>
<dbReference type="RefSeq" id="WP_020906143.1">
    <property type="nucleotide sequence ID" value="NC_012490.1"/>
</dbReference>
<dbReference type="SMR" id="C0ZPX0"/>
<dbReference type="KEGG" id="rer:RER_07400"/>
<dbReference type="eggNOG" id="COG4569">
    <property type="taxonomic scope" value="Bacteria"/>
</dbReference>
<dbReference type="HOGENOM" id="CLU_062208_0_0_11"/>
<dbReference type="Proteomes" id="UP000002204">
    <property type="component" value="Chromosome"/>
</dbReference>
<dbReference type="GO" id="GO:0008774">
    <property type="term" value="F:acetaldehyde dehydrogenase (acetylating) activity"/>
    <property type="evidence" value="ECO:0007669"/>
    <property type="project" value="UniProtKB-UniRule"/>
</dbReference>
<dbReference type="GO" id="GO:0051287">
    <property type="term" value="F:NAD binding"/>
    <property type="evidence" value="ECO:0007669"/>
    <property type="project" value="UniProtKB-UniRule"/>
</dbReference>
<dbReference type="GO" id="GO:0009056">
    <property type="term" value="P:catabolic process"/>
    <property type="evidence" value="ECO:0007669"/>
    <property type="project" value="UniProtKB-KW"/>
</dbReference>
<dbReference type="CDD" id="cd23933">
    <property type="entry name" value="ALDH_C"/>
    <property type="match status" value="1"/>
</dbReference>
<dbReference type="Gene3D" id="3.30.360.10">
    <property type="entry name" value="Dihydrodipicolinate Reductase, domain 2"/>
    <property type="match status" value="1"/>
</dbReference>
<dbReference type="Gene3D" id="3.40.50.720">
    <property type="entry name" value="NAD(P)-binding Rossmann-like Domain"/>
    <property type="match status" value="1"/>
</dbReference>
<dbReference type="HAMAP" id="MF_01657">
    <property type="entry name" value="Ac_ald_DH_ac"/>
    <property type="match status" value="1"/>
</dbReference>
<dbReference type="InterPro" id="IPR003361">
    <property type="entry name" value="Acetaldehyde_dehydrogenase"/>
</dbReference>
<dbReference type="InterPro" id="IPR015426">
    <property type="entry name" value="Acetylaldehyde_DH_C"/>
</dbReference>
<dbReference type="InterPro" id="IPR036291">
    <property type="entry name" value="NAD(P)-bd_dom_sf"/>
</dbReference>
<dbReference type="InterPro" id="IPR000534">
    <property type="entry name" value="Semialdehyde_DH_NAD-bd"/>
</dbReference>
<dbReference type="NCBIfam" id="TIGR03215">
    <property type="entry name" value="ac_ald_DH_ac"/>
    <property type="match status" value="1"/>
</dbReference>
<dbReference type="NCBIfam" id="NF006157">
    <property type="entry name" value="PRK08300.1"/>
    <property type="match status" value="1"/>
</dbReference>
<dbReference type="Pfam" id="PF09290">
    <property type="entry name" value="AcetDehyd-dimer"/>
    <property type="match status" value="1"/>
</dbReference>
<dbReference type="Pfam" id="PF01118">
    <property type="entry name" value="Semialdhyde_dh"/>
    <property type="match status" value="1"/>
</dbReference>
<dbReference type="PIRSF" id="PIRSF015689">
    <property type="entry name" value="Actaldh_dh_actl"/>
    <property type="match status" value="1"/>
</dbReference>
<dbReference type="SMART" id="SM00859">
    <property type="entry name" value="Semialdhyde_dh"/>
    <property type="match status" value="1"/>
</dbReference>
<dbReference type="SUPFAM" id="SSF55347">
    <property type="entry name" value="Glyceraldehyde-3-phosphate dehydrogenase-like, C-terminal domain"/>
    <property type="match status" value="1"/>
</dbReference>
<dbReference type="SUPFAM" id="SSF51735">
    <property type="entry name" value="NAD(P)-binding Rossmann-fold domains"/>
    <property type="match status" value="1"/>
</dbReference>
<protein>
    <recommendedName>
        <fullName evidence="1">Acetaldehyde dehydrogenase 1</fullName>
        <ecNumber evidence="1">1.2.1.10</ecNumber>
    </recommendedName>
    <alternativeName>
        <fullName evidence="1">Acetaldehyde dehydrogenase [acetylating] 1</fullName>
    </alternativeName>
</protein>
<name>ACDH1_RHOE4</name>
<proteinExistence type="inferred from homology"/>
<keyword id="KW-0058">Aromatic hydrocarbons catabolism</keyword>
<keyword id="KW-0520">NAD</keyword>
<keyword id="KW-0560">Oxidoreductase</keyword>
<evidence type="ECO:0000255" key="1">
    <source>
        <dbReference type="HAMAP-Rule" id="MF_01657"/>
    </source>
</evidence>
<accession>C0ZPX0</accession>